<accession>P0A1X4</accession>
<accession>P18482</accession>
<sequence>MPSIRLADLAEQLDAELHGDGDIVITGVASMQSATTGHITFMVNPKYREHLGLCQASAVVMTQDDLPFAKSAALVVKNPYLTYARMAQILDTTPQPAQNIAPSAVIDATATLGSNVSVGANAVIESGVQLGDNVVIGAGCFVGKNSKIGAGSRLWANVTIYHDIQIGENCLIQSSTVIGADGFGYANDRGNWVKIPQLGRVIIGDRVEIGACTTIDRGALDDTVIGNGVIIDNQCQIAHNVVIGDNTAVAGGVIMAGSLKIGRYCMIGGASVINGHMEICDKVTVTGMGMVMRPITEPGVYSSGIPLQPNKVWRKTAALVMNIDDMSKRLKAIERKVNQQD</sequence>
<comment type="function">
    <text evidence="2">Catalyzes the N-acylation of UDP-3-O-(hydroxytetradecanoyl)glucosamine using 3-hydroxytetradecanoyl-ACP as the acyl donor. Is involved in the biosynthesis of lipid A, a phosphorylated glycolipid that anchors the lipopolysaccharide to the outer membrane of the cell.</text>
</comment>
<comment type="catalytic activity">
    <reaction evidence="2">
        <text>a UDP-3-O-[(3R)-3-hydroxyacyl]-alpha-D-glucosamine + a (3R)-hydroxyacyl-[ACP] = a UDP-2-N,3-O-bis[(3R)-3-hydroxyacyl]-alpha-D-glucosamine + holo-[ACP] + H(+)</text>
        <dbReference type="Rhea" id="RHEA:53836"/>
        <dbReference type="Rhea" id="RHEA-COMP:9685"/>
        <dbReference type="Rhea" id="RHEA-COMP:9945"/>
        <dbReference type="ChEBI" id="CHEBI:15378"/>
        <dbReference type="ChEBI" id="CHEBI:64479"/>
        <dbReference type="ChEBI" id="CHEBI:78827"/>
        <dbReference type="ChEBI" id="CHEBI:137740"/>
        <dbReference type="ChEBI" id="CHEBI:137748"/>
        <dbReference type="EC" id="2.3.1.191"/>
    </reaction>
</comment>
<comment type="catalytic activity">
    <reaction evidence="2">
        <text>UDP-3-O-[(3R)-3-hydroxytetradecanoyl]-alpha-D-glucosamine + (3R)-hydroxytetradecanoyl-[ACP] = UDP-2-N,3-O-bis[(3R)-3-hydroxytetradecanoyl]-alpha-D-glucosamine + holo-[ACP] + H(+)</text>
        <dbReference type="Rhea" id="RHEA:17817"/>
        <dbReference type="Rhea" id="RHEA-COMP:9646"/>
        <dbReference type="Rhea" id="RHEA-COMP:9685"/>
        <dbReference type="ChEBI" id="CHEBI:15378"/>
        <dbReference type="ChEBI" id="CHEBI:64479"/>
        <dbReference type="ChEBI" id="CHEBI:71573"/>
        <dbReference type="ChEBI" id="CHEBI:78474"/>
        <dbReference type="ChEBI" id="CHEBI:78847"/>
    </reaction>
</comment>
<comment type="pathway">
    <text evidence="2">Glycolipid biosynthesis; lipid IV(A) biosynthesis; lipid IV(A) from (3R)-3-hydroxytetradecanoyl-[acyl-carrier-protein] and UDP-N-acetyl-alpha-D-glucosamine: step 3/6.</text>
</comment>
<comment type="subunit">
    <text evidence="2">Homotrimer.</text>
</comment>
<comment type="miscellaneous">
    <text>The SS-C mutant is antibiotic supersensitive; its outer membrane permeability barrier against hydrophobic antibiotics is severely deficient.</text>
</comment>
<comment type="similarity">
    <text evidence="2">Belongs to the transferase hexapeptide repeat family. LpxD subfamily.</text>
</comment>
<comment type="caution">
    <text evidence="4">Was originally thought to be involved in transcription.</text>
</comment>
<reference key="1">
    <citation type="journal article" date="1990" name="Biochem. Biophys. Res. Commun.">
        <title>Primary structure and expression of the Ssc-protein of Salmonella typhimurium.</title>
        <authorList>
            <person name="Hirvas L."/>
            <person name="Koski P."/>
            <person name="Vaara M."/>
        </authorList>
    </citation>
    <scope>NUCLEOTIDE SEQUENCE [GENOMIC DNA]</scope>
</reference>
<reference key="2">
    <citation type="journal article" date="1991" name="Biochem. Biophys. Res. Commun.">
        <authorList>
            <person name="Hirvas L."/>
            <person name="Koski P."/>
            <person name="Vaara M."/>
        </authorList>
    </citation>
    <scope>ERRATUM OF PUBMED:2256935</scope>
</reference>
<reference key="3">
    <citation type="journal article" date="1991" name="EMBO J.">
        <title>Identification and sequence analysis of the gene mutated in the conditionally lethal outer membrane permeability mutant SS-C of Salmonella typhimurium.</title>
        <authorList>
            <person name="Hirvas L."/>
            <person name="Koski P."/>
            <person name="Vaara M."/>
        </authorList>
    </citation>
    <scope>NUCLEOTIDE SEQUENCE [GENOMIC DNA]</scope>
    <scope>IDENTIFICATION OF MUTANT SS-C</scope>
    <source>
        <strain>LT2 / SH5014</strain>
    </source>
</reference>
<reference key="4">
    <citation type="journal article" date="2001" name="Nature">
        <title>Complete genome sequence of Salmonella enterica serovar Typhimurium LT2.</title>
        <authorList>
            <person name="McClelland M."/>
            <person name="Sanderson K.E."/>
            <person name="Spieth J."/>
            <person name="Clifton S.W."/>
            <person name="Latreille P."/>
            <person name="Courtney L."/>
            <person name="Porwollik S."/>
            <person name="Ali J."/>
            <person name="Dante M."/>
            <person name="Du F."/>
            <person name="Hou S."/>
            <person name="Layman D."/>
            <person name="Leonard S."/>
            <person name="Nguyen C."/>
            <person name="Scott K."/>
            <person name="Holmes A."/>
            <person name="Grewal N."/>
            <person name="Mulvaney E."/>
            <person name="Ryan E."/>
            <person name="Sun H."/>
            <person name="Florea L."/>
            <person name="Miller W."/>
            <person name="Stoneking T."/>
            <person name="Nhan M."/>
            <person name="Waterston R."/>
            <person name="Wilson R.K."/>
        </authorList>
    </citation>
    <scope>NUCLEOTIDE SEQUENCE [LARGE SCALE GENOMIC DNA]</scope>
    <source>
        <strain>LT2 / SGSC1412 / ATCC 700720</strain>
    </source>
</reference>
<reference key="5">
    <citation type="journal article" date="1984" name="J. Bacteriol.">
        <title>New Salmonella typhimurium mutants with altered outer membrane permeability.</title>
        <authorList>
            <person name="Sukupolvi S."/>
            <person name="Vaara M."/>
            <person name="Helander I.M."/>
            <person name="Viljanen P."/>
            <person name="Makela P.H."/>
        </authorList>
    </citation>
    <scope>MUTAGENESIS OF VAL-291</scope>
    <source>
        <strain>LT2 / SH5014</strain>
    </source>
</reference>
<feature type="initiator methionine" description="Removed" evidence="1">
    <location>
        <position position="1"/>
    </location>
</feature>
<feature type="chain" id="PRO_0000059702" description="UDP-3-O-(3-hydroxymyristoyl)glucosamine N-acyltransferase">
    <location>
        <begin position="2"/>
        <end position="341"/>
    </location>
</feature>
<feature type="active site" description="Proton acceptor" evidence="2">
    <location>
        <position position="239"/>
    </location>
</feature>
<feature type="mutagenesis site" description="In SS-C; sensitive to hydrophobic antibiotics and compounds." evidence="3">
    <original>V</original>
    <variation>M</variation>
    <location>
        <position position="291"/>
    </location>
</feature>
<proteinExistence type="evidence at protein level"/>
<dbReference type="EC" id="2.3.1.191" evidence="2"/>
<dbReference type="EMBL" id="M35193">
    <property type="protein sequence ID" value="AAA27229.1"/>
    <property type="molecule type" value="Genomic_DNA"/>
</dbReference>
<dbReference type="EMBL" id="AE006468">
    <property type="protein sequence ID" value="AAL19190.1"/>
    <property type="molecule type" value="Genomic_DNA"/>
</dbReference>
<dbReference type="PIR" id="B37083">
    <property type="entry name" value="B37083"/>
</dbReference>
<dbReference type="RefSeq" id="NP_459231.1">
    <property type="nucleotide sequence ID" value="NC_003197.2"/>
</dbReference>
<dbReference type="RefSeq" id="WP_001139265.1">
    <property type="nucleotide sequence ID" value="NC_003197.2"/>
</dbReference>
<dbReference type="SMR" id="P0A1X4"/>
<dbReference type="STRING" id="99287.STM0226"/>
<dbReference type="PaxDb" id="99287-STM0226"/>
<dbReference type="GeneID" id="1251744"/>
<dbReference type="KEGG" id="stm:STM0226"/>
<dbReference type="PATRIC" id="fig|99287.12.peg.239"/>
<dbReference type="HOGENOM" id="CLU_049865_0_1_6"/>
<dbReference type="OMA" id="PAMEIHE"/>
<dbReference type="PhylomeDB" id="P0A1X4"/>
<dbReference type="BioCyc" id="SENT99287:STM0226-MONOMER"/>
<dbReference type="UniPathway" id="UPA00359">
    <property type="reaction ID" value="UER00479"/>
</dbReference>
<dbReference type="Proteomes" id="UP000001014">
    <property type="component" value="Chromosome"/>
</dbReference>
<dbReference type="GO" id="GO:0016020">
    <property type="term" value="C:membrane"/>
    <property type="evidence" value="ECO:0007669"/>
    <property type="project" value="GOC"/>
</dbReference>
<dbReference type="GO" id="GO:0016410">
    <property type="term" value="F:N-acyltransferase activity"/>
    <property type="evidence" value="ECO:0007669"/>
    <property type="project" value="InterPro"/>
</dbReference>
<dbReference type="GO" id="GO:0103118">
    <property type="term" value="F:UDP-3-O-(R-3-hydroxymyristoyl)-glucosamine N-acyltransferase activity"/>
    <property type="evidence" value="ECO:0007669"/>
    <property type="project" value="UniProtKB-EC"/>
</dbReference>
<dbReference type="GO" id="GO:0009245">
    <property type="term" value="P:lipid A biosynthetic process"/>
    <property type="evidence" value="ECO:0007669"/>
    <property type="project" value="UniProtKB-UniRule"/>
</dbReference>
<dbReference type="GO" id="GO:0046677">
    <property type="term" value="P:response to antibiotic"/>
    <property type="evidence" value="ECO:0007669"/>
    <property type="project" value="UniProtKB-KW"/>
</dbReference>
<dbReference type="CDD" id="cd03352">
    <property type="entry name" value="LbH_LpxD"/>
    <property type="match status" value="1"/>
</dbReference>
<dbReference type="FunFam" id="1.20.5.170:FF:000032">
    <property type="entry name" value="UDP-3-O-(3-hydroxymyristoyl)glucosamine N-acyltransferase"/>
    <property type="match status" value="1"/>
</dbReference>
<dbReference type="FunFam" id="2.160.10.10:FF:000005">
    <property type="entry name" value="UDP-3-O-(3-hydroxymyristoyl)glucosamine N-acyltransferase"/>
    <property type="match status" value="1"/>
</dbReference>
<dbReference type="FunFam" id="3.40.1390.10:FF:000001">
    <property type="entry name" value="UDP-3-O-(3-hydroxymyristoyl)glucosamine N-acyltransferase"/>
    <property type="match status" value="1"/>
</dbReference>
<dbReference type="Gene3D" id="1.20.5.170">
    <property type="match status" value="1"/>
</dbReference>
<dbReference type="Gene3D" id="2.160.10.10">
    <property type="entry name" value="Hexapeptide repeat proteins"/>
    <property type="match status" value="1"/>
</dbReference>
<dbReference type="Gene3D" id="3.40.1390.10">
    <property type="entry name" value="MurE/MurF, N-terminal domain"/>
    <property type="match status" value="1"/>
</dbReference>
<dbReference type="HAMAP" id="MF_00523">
    <property type="entry name" value="LpxD"/>
    <property type="match status" value="1"/>
</dbReference>
<dbReference type="InterPro" id="IPR001451">
    <property type="entry name" value="Hexapep"/>
</dbReference>
<dbReference type="InterPro" id="IPR018357">
    <property type="entry name" value="Hexapep_transf_CS"/>
</dbReference>
<dbReference type="InterPro" id="IPR007691">
    <property type="entry name" value="LpxD"/>
</dbReference>
<dbReference type="InterPro" id="IPR011004">
    <property type="entry name" value="Trimer_LpxA-like_sf"/>
</dbReference>
<dbReference type="InterPro" id="IPR020573">
    <property type="entry name" value="UDP_GlcNAc_AcTrfase_non-rep"/>
</dbReference>
<dbReference type="NCBIfam" id="TIGR01853">
    <property type="entry name" value="lipid_A_lpxD"/>
    <property type="match status" value="1"/>
</dbReference>
<dbReference type="NCBIfam" id="NF002060">
    <property type="entry name" value="PRK00892.1"/>
    <property type="match status" value="1"/>
</dbReference>
<dbReference type="PANTHER" id="PTHR43378">
    <property type="entry name" value="UDP-3-O-ACYLGLUCOSAMINE N-ACYLTRANSFERASE"/>
    <property type="match status" value="1"/>
</dbReference>
<dbReference type="PANTHER" id="PTHR43378:SF2">
    <property type="entry name" value="UDP-3-O-ACYLGLUCOSAMINE N-ACYLTRANSFERASE 1, MITOCHONDRIAL-RELATED"/>
    <property type="match status" value="1"/>
</dbReference>
<dbReference type="Pfam" id="PF00132">
    <property type="entry name" value="Hexapep"/>
    <property type="match status" value="3"/>
</dbReference>
<dbReference type="Pfam" id="PF04613">
    <property type="entry name" value="LpxD"/>
    <property type="match status" value="1"/>
</dbReference>
<dbReference type="SUPFAM" id="SSF51161">
    <property type="entry name" value="Trimeric LpxA-like enzymes"/>
    <property type="match status" value="1"/>
</dbReference>
<dbReference type="PROSITE" id="PS00101">
    <property type="entry name" value="HEXAPEP_TRANSFERASES"/>
    <property type="match status" value="4"/>
</dbReference>
<name>LPXD_SALTY</name>
<gene>
    <name evidence="2" type="primary">lpxD</name>
    <name type="synonym">firA</name>
    <name type="synonym">ssc</name>
    <name type="ordered locus">STM0226</name>
</gene>
<organism>
    <name type="scientific">Salmonella typhimurium (strain LT2 / SGSC1412 / ATCC 700720)</name>
    <dbReference type="NCBI Taxonomy" id="99287"/>
    <lineage>
        <taxon>Bacteria</taxon>
        <taxon>Pseudomonadati</taxon>
        <taxon>Pseudomonadota</taxon>
        <taxon>Gammaproteobacteria</taxon>
        <taxon>Enterobacterales</taxon>
        <taxon>Enterobacteriaceae</taxon>
        <taxon>Salmonella</taxon>
    </lineage>
</organism>
<protein>
    <recommendedName>
        <fullName evidence="2">UDP-3-O-(3-hydroxymyristoyl)glucosamine N-acyltransferase</fullName>
        <shortName evidence="2">UDP-3-O-(3-OHC14)-GlcN N-acyltransferase</shortName>
        <ecNumber evidence="2">2.3.1.191</ecNumber>
    </recommendedName>
    <alternativeName>
        <fullName evidence="2">UDP-3-O-(3-hydroxytetradecanoyl)glucosamine N-acyltransferase</fullName>
    </alternativeName>
</protein>
<keyword id="KW-0012">Acyltransferase</keyword>
<keyword id="KW-0046">Antibiotic resistance</keyword>
<keyword id="KW-0441">Lipid A biosynthesis</keyword>
<keyword id="KW-0444">Lipid biosynthesis</keyword>
<keyword id="KW-0443">Lipid metabolism</keyword>
<keyword id="KW-1185">Reference proteome</keyword>
<keyword id="KW-0677">Repeat</keyword>
<keyword id="KW-0808">Transferase</keyword>
<evidence type="ECO:0000250" key="1"/>
<evidence type="ECO:0000255" key="2">
    <source>
        <dbReference type="HAMAP-Rule" id="MF_00523"/>
    </source>
</evidence>
<evidence type="ECO:0000269" key="3">
    <source>
    </source>
</evidence>
<evidence type="ECO:0000305" key="4"/>